<keyword id="KW-0687">Ribonucleoprotein</keyword>
<keyword id="KW-0689">Ribosomal protein</keyword>
<keyword id="KW-0694">RNA-binding</keyword>
<keyword id="KW-0699">rRNA-binding</keyword>
<comment type="function">
    <text evidence="1">Binds the lower part of the 30S subunit head. Binds mRNA in the 70S ribosome, positioning it for translation.</text>
</comment>
<comment type="subunit">
    <text evidence="1">Part of the 30S ribosomal subunit. Forms a tight complex with proteins S10 and S14.</text>
</comment>
<comment type="similarity">
    <text evidence="1">Belongs to the universal ribosomal protein uS3 family.</text>
</comment>
<organism>
    <name type="scientific">Chlamydia pneumoniae</name>
    <name type="common">Chlamydophila pneumoniae</name>
    <dbReference type="NCBI Taxonomy" id="83558"/>
    <lineage>
        <taxon>Bacteria</taxon>
        <taxon>Pseudomonadati</taxon>
        <taxon>Chlamydiota</taxon>
        <taxon>Chlamydiia</taxon>
        <taxon>Chlamydiales</taxon>
        <taxon>Chlamydiaceae</taxon>
        <taxon>Chlamydia/Chlamydophila group</taxon>
        <taxon>Chlamydia</taxon>
    </lineage>
</organism>
<sequence length="223" mass="24585">MGQKGCPIGFRTGVTKKWRSLWYGNKQEFGKFLIEDVRIRQFLRKKPSCQGAAGFVVRRMSGKIEVTIQTARPGLVIGKKGAEVDLLKEELRALTGKEVWLEIAEIKRPELNAKLVADNIARQIERRVSFRRAMKKAMQSVMDAGAVGVKIQVSGRLAGAEIARSEWYKNGRVPLHTLRADIDYATACAETTYGIIGIKVWINLGENSSSTTPNNPAAPSAAA</sequence>
<proteinExistence type="inferred from homology"/>
<name>RS3_CHLPN</name>
<feature type="chain" id="PRO_0000130099" description="Small ribosomal subunit protein uS3">
    <location>
        <begin position="1"/>
        <end position="223"/>
    </location>
</feature>
<feature type="domain" description="KH type-2" evidence="1">
    <location>
        <begin position="39"/>
        <end position="107"/>
    </location>
</feature>
<feature type="sequence conflict" description="In Ref. 1; AAD18780." evidence="2" ref="1">
    <original>K</original>
    <variation>R</variation>
    <location>
        <position position="17"/>
    </location>
</feature>
<evidence type="ECO:0000255" key="1">
    <source>
        <dbReference type="HAMAP-Rule" id="MF_01309"/>
    </source>
</evidence>
<evidence type="ECO:0000305" key="2"/>
<accession>Q9Z7R3</accession>
<accession>Q9JRT5</accession>
<gene>
    <name evidence="1" type="primary">rpsC</name>
    <name type="synonym">rs3</name>
    <name type="ordered locus">CPn_0641</name>
    <name type="ordered locus">CP_0106</name>
    <name type="ordered locus">CpB0667</name>
</gene>
<protein>
    <recommendedName>
        <fullName evidence="1">Small ribosomal subunit protein uS3</fullName>
    </recommendedName>
    <alternativeName>
        <fullName evidence="2">30S ribosomal protein S3</fullName>
    </alternativeName>
</protein>
<dbReference type="EMBL" id="AE001363">
    <property type="protein sequence ID" value="AAD18780.1"/>
    <property type="molecule type" value="Genomic_DNA"/>
</dbReference>
<dbReference type="EMBL" id="AE002161">
    <property type="protein sequence ID" value="AAF37989.1"/>
    <property type="molecule type" value="Genomic_DNA"/>
</dbReference>
<dbReference type="EMBL" id="BA000008">
    <property type="protein sequence ID" value="BAA98848.1"/>
    <property type="molecule type" value="Genomic_DNA"/>
</dbReference>
<dbReference type="EMBL" id="AE009440">
    <property type="protein sequence ID" value="AAP98596.1"/>
    <property type="molecule type" value="Genomic_DNA"/>
</dbReference>
<dbReference type="PIR" id="C72055">
    <property type="entry name" value="C72055"/>
</dbReference>
<dbReference type="PIR" id="F81611">
    <property type="entry name" value="F81611"/>
</dbReference>
<dbReference type="PIR" id="F86570">
    <property type="entry name" value="F86570"/>
</dbReference>
<dbReference type="RefSeq" id="NP_224837.1">
    <property type="nucleotide sequence ID" value="NC_000922.1"/>
</dbReference>
<dbReference type="RefSeq" id="WP_010883279.1">
    <property type="nucleotide sequence ID" value="NZ_LN847257.1"/>
</dbReference>
<dbReference type="RefSeq" id="WP_010891971.1">
    <property type="nucleotide sequence ID" value="NZ_LN846995.1"/>
</dbReference>
<dbReference type="SMR" id="Q9Z7R3"/>
<dbReference type="STRING" id="406984.CPK_ORF00041"/>
<dbReference type="GeneID" id="45050691"/>
<dbReference type="KEGG" id="cpa:CP_0106"/>
<dbReference type="KEGG" id="cpj:rs3"/>
<dbReference type="KEGG" id="cpn:CPn_0641"/>
<dbReference type="KEGG" id="cpt:CpB0667"/>
<dbReference type="PATRIC" id="fig|115713.3.peg.711"/>
<dbReference type="eggNOG" id="COG0092">
    <property type="taxonomic scope" value="Bacteria"/>
</dbReference>
<dbReference type="HOGENOM" id="CLU_058591_0_2_0"/>
<dbReference type="OrthoDB" id="9806396at2"/>
<dbReference type="Proteomes" id="UP000000583">
    <property type="component" value="Chromosome"/>
</dbReference>
<dbReference type="Proteomes" id="UP000000801">
    <property type="component" value="Chromosome"/>
</dbReference>
<dbReference type="GO" id="GO:0022627">
    <property type="term" value="C:cytosolic small ribosomal subunit"/>
    <property type="evidence" value="ECO:0007669"/>
    <property type="project" value="TreeGrafter"/>
</dbReference>
<dbReference type="GO" id="GO:0003729">
    <property type="term" value="F:mRNA binding"/>
    <property type="evidence" value="ECO:0007669"/>
    <property type="project" value="UniProtKB-UniRule"/>
</dbReference>
<dbReference type="GO" id="GO:0019843">
    <property type="term" value="F:rRNA binding"/>
    <property type="evidence" value="ECO:0007669"/>
    <property type="project" value="UniProtKB-UniRule"/>
</dbReference>
<dbReference type="GO" id="GO:0003735">
    <property type="term" value="F:structural constituent of ribosome"/>
    <property type="evidence" value="ECO:0007669"/>
    <property type="project" value="InterPro"/>
</dbReference>
<dbReference type="GO" id="GO:0006412">
    <property type="term" value="P:translation"/>
    <property type="evidence" value="ECO:0007669"/>
    <property type="project" value="UniProtKB-UniRule"/>
</dbReference>
<dbReference type="CDD" id="cd02412">
    <property type="entry name" value="KH-II_30S_S3"/>
    <property type="match status" value="1"/>
</dbReference>
<dbReference type="FunFam" id="3.30.300.20:FF:000001">
    <property type="entry name" value="30S ribosomal protein S3"/>
    <property type="match status" value="1"/>
</dbReference>
<dbReference type="Gene3D" id="3.30.300.20">
    <property type="match status" value="1"/>
</dbReference>
<dbReference type="Gene3D" id="3.30.1140.32">
    <property type="entry name" value="Ribosomal protein S3, C-terminal domain"/>
    <property type="match status" value="1"/>
</dbReference>
<dbReference type="HAMAP" id="MF_01309_B">
    <property type="entry name" value="Ribosomal_uS3_B"/>
    <property type="match status" value="1"/>
</dbReference>
<dbReference type="InterPro" id="IPR004087">
    <property type="entry name" value="KH_dom"/>
</dbReference>
<dbReference type="InterPro" id="IPR015946">
    <property type="entry name" value="KH_dom-like_a/b"/>
</dbReference>
<dbReference type="InterPro" id="IPR004044">
    <property type="entry name" value="KH_dom_type_2"/>
</dbReference>
<dbReference type="InterPro" id="IPR009019">
    <property type="entry name" value="KH_sf_prok-type"/>
</dbReference>
<dbReference type="InterPro" id="IPR036419">
    <property type="entry name" value="Ribosomal_S3_C_sf"/>
</dbReference>
<dbReference type="InterPro" id="IPR005704">
    <property type="entry name" value="Ribosomal_uS3_bac-typ"/>
</dbReference>
<dbReference type="InterPro" id="IPR001351">
    <property type="entry name" value="Ribosomal_uS3_C"/>
</dbReference>
<dbReference type="InterPro" id="IPR018280">
    <property type="entry name" value="Ribosomal_uS3_CS"/>
</dbReference>
<dbReference type="NCBIfam" id="TIGR01009">
    <property type="entry name" value="rpsC_bact"/>
    <property type="match status" value="1"/>
</dbReference>
<dbReference type="PANTHER" id="PTHR11760">
    <property type="entry name" value="30S/40S RIBOSOMAL PROTEIN S3"/>
    <property type="match status" value="1"/>
</dbReference>
<dbReference type="PANTHER" id="PTHR11760:SF19">
    <property type="entry name" value="SMALL RIBOSOMAL SUBUNIT PROTEIN US3C"/>
    <property type="match status" value="1"/>
</dbReference>
<dbReference type="Pfam" id="PF07650">
    <property type="entry name" value="KH_2"/>
    <property type="match status" value="1"/>
</dbReference>
<dbReference type="Pfam" id="PF00189">
    <property type="entry name" value="Ribosomal_S3_C"/>
    <property type="match status" value="1"/>
</dbReference>
<dbReference type="SMART" id="SM00322">
    <property type="entry name" value="KH"/>
    <property type="match status" value="1"/>
</dbReference>
<dbReference type="SUPFAM" id="SSF54814">
    <property type="entry name" value="Prokaryotic type KH domain (KH-domain type II)"/>
    <property type="match status" value="1"/>
</dbReference>
<dbReference type="SUPFAM" id="SSF54821">
    <property type="entry name" value="Ribosomal protein S3 C-terminal domain"/>
    <property type="match status" value="1"/>
</dbReference>
<dbReference type="PROSITE" id="PS50823">
    <property type="entry name" value="KH_TYPE_2"/>
    <property type="match status" value="1"/>
</dbReference>
<dbReference type="PROSITE" id="PS00548">
    <property type="entry name" value="RIBOSOMAL_S3"/>
    <property type="match status" value="1"/>
</dbReference>
<reference key="1">
    <citation type="journal article" date="1999" name="Nat. Genet.">
        <title>Comparative genomes of Chlamydia pneumoniae and C. trachomatis.</title>
        <authorList>
            <person name="Kalman S."/>
            <person name="Mitchell W.P."/>
            <person name="Marathe R."/>
            <person name="Lammel C.J."/>
            <person name="Fan J."/>
            <person name="Hyman R.W."/>
            <person name="Olinger L."/>
            <person name="Grimwood J."/>
            <person name="Davis R.W."/>
            <person name="Stephens R.S."/>
        </authorList>
    </citation>
    <scope>NUCLEOTIDE SEQUENCE [LARGE SCALE GENOMIC DNA]</scope>
    <source>
        <strain>CWL029</strain>
    </source>
</reference>
<reference key="2">
    <citation type="journal article" date="2000" name="Nucleic Acids Res.">
        <title>Genome sequences of Chlamydia trachomatis MoPn and Chlamydia pneumoniae AR39.</title>
        <authorList>
            <person name="Read T.D."/>
            <person name="Brunham R.C."/>
            <person name="Shen C."/>
            <person name="Gill S.R."/>
            <person name="Heidelberg J.F."/>
            <person name="White O."/>
            <person name="Hickey E.K."/>
            <person name="Peterson J.D."/>
            <person name="Utterback T.R."/>
            <person name="Berry K.J."/>
            <person name="Bass S."/>
            <person name="Linher K.D."/>
            <person name="Weidman J.F."/>
            <person name="Khouri H.M."/>
            <person name="Craven B."/>
            <person name="Bowman C."/>
            <person name="Dodson R.J."/>
            <person name="Gwinn M.L."/>
            <person name="Nelson W.C."/>
            <person name="DeBoy R.T."/>
            <person name="Kolonay J.F."/>
            <person name="McClarty G."/>
            <person name="Salzberg S.L."/>
            <person name="Eisen J.A."/>
            <person name="Fraser C.M."/>
        </authorList>
    </citation>
    <scope>NUCLEOTIDE SEQUENCE [LARGE SCALE GENOMIC DNA]</scope>
    <source>
        <strain>AR39</strain>
    </source>
</reference>
<reference key="3">
    <citation type="journal article" date="2000" name="Nucleic Acids Res.">
        <title>Comparison of whole genome sequences of Chlamydia pneumoniae J138 from Japan and CWL029 from USA.</title>
        <authorList>
            <person name="Shirai M."/>
            <person name="Hirakawa H."/>
            <person name="Kimoto M."/>
            <person name="Tabuchi M."/>
            <person name="Kishi F."/>
            <person name="Ouchi K."/>
            <person name="Shiba T."/>
            <person name="Ishii K."/>
            <person name="Hattori M."/>
            <person name="Kuhara S."/>
            <person name="Nakazawa T."/>
        </authorList>
    </citation>
    <scope>NUCLEOTIDE SEQUENCE [LARGE SCALE GENOMIC DNA]</scope>
    <source>
        <strain>J138</strain>
    </source>
</reference>
<reference key="4">
    <citation type="submission" date="2002-05" db="EMBL/GenBank/DDBJ databases">
        <title>The genome sequence of Chlamydia pneumoniae TW183 and comparison with other Chlamydia strains based on whole genome sequence analysis.</title>
        <authorList>
            <person name="Geng M.M."/>
            <person name="Schuhmacher A."/>
            <person name="Muehldorfer I."/>
            <person name="Bensch K.W."/>
            <person name="Schaefer K.P."/>
            <person name="Schneider S."/>
            <person name="Pohl T."/>
            <person name="Essig A."/>
            <person name="Marre R."/>
            <person name="Melchers K."/>
        </authorList>
    </citation>
    <scope>NUCLEOTIDE SEQUENCE [LARGE SCALE GENOMIC DNA]</scope>
    <source>
        <strain>TW-183</strain>
    </source>
</reference>